<organism>
    <name type="scientific">Clostridium botulinum (strain Okra / Type B1)</name>
    <dbReference type="NCBI Taxonomy" id="498213"/>
    <lineage>
        <taxon>Bacteria</taxon>
        <taxon>Bacillati</taxon>
        <taxon>Bacillota</taxon>
        <taxon>Clostridia</taxon>
        <taxon>Eubacteriales</taxon>
        <taxon>Clostridiaceae</taxon>
        <taxon>Clostridium</taxon>
    </lineage>
</organism>
<dbReference type="EMBL" id="CP000939">
    <property type="protein sequence ID" value="ACA44898.1"/>
    <property type="molecule type" value="Genomic_DNA"/>
</dbReference>
<dbReference type="RefSeq" id="WP_003357662.1">
    <property type="nucleotide sequence ID" value="NC_010516.1"/>
</dbReference>
<dbReference type="SMR" id="B1IGB8"/>
<dbReference type="GeneID" id="5184277"/>
<dbReference type="KEGG" id="cbb:CLD_1060"/>
<dbReference type="HOGENOM" id="CLU_046483_2_1_9"/>
<dbReference type="Proteomes" id="UP000008541">
    <property type="component" value="Chromosome"/>
</dbReference>
<dbReference type="GO" id="GO:0022627">
    <property type="term" value="C:cytosolic small ribosomal subunit"/>
    <property type="evidence" value="ECO:0007669"/>
    <property type="project" value="TreeGrafter"/>
</dbReference>
<dbReference type="GO" id="GO:0003723">
    <property type="term" value="F:RNA binding"/>
    <property type="evidence" value="ECO:0007669"/>
    <property type="project" value="TreeGrafter"/>
</dbReference>
<dbReference type="GO" id="GO:0003735">
    <property type="term" value="F:structural constituent of ribosome"/>
    <property type="evidence" value="ECO:0007669"/>
    <property type="project" value="InterPro"/>
</dbReference>
<dbReference type="GO" id="GO:0006412">
    <property type="term" value="P:translation"/>
    <property type="evidence" value="ECO:0007669"/>
    <property type="project" value="UniProtKB-UniRule"/>
</dbReference>
<dbReference type="FunFam" id="3.30.230.10:FF:000001">
    <property type="entry name" value="30S ribosomal protein S9"/>
    <property type="match status" value="1"/>
</dbReference>
<dbReference type="Gene3D" id="3.30.230.10">
    <property type="match status" value="1"/>
</dbReference>
<dbReference type="HAMAP" id="MF_00532_B">
    <property type="entry name" value="Ribosomal_uS9_B"/>
    <property type="match status" value="1"/>
</dbReference>
<dbReference type="InterPro" id="IPR020568">
    <property type="entry name" value="Ribosomal_Su5_D2-typ_SF"/>
</dbReference>
<dbReference type="InterPro" id="IPR000754">
    <property type="entry name" value="Ribosomal_uS9"/>
</dbReference>
<dbReference type="InterPro" id="IPR023035">
    <property type="entry name" value="Ribosomal_uS9_bac/plastid"/>
</dbReference>
<dbReference type="InterPro" id="IPR020574">
    <property type="entry name" value="Ribosomal_uS9_CS"/>
</dbReference>
<dbReference type="InterPro" id="IPR014721">
    <property type="entry name" value="Ribsml_uS5_D2-typ_fold_subgr"/>
</dbReference>
<dbReference type="NCBIfam" id="NF001099">
    <property type="entry name" value="PRK00132.1"/>
    <property type="match status" value="1"/>
</dbReference>
<dbReference type="PANTHER" id="PTHR21569">
    <property type="entry name" value="RIBOSOMAL PROTEIN S9"/>
    <property type="match status" value="1"/>
</dbReference>
<dbReference type="PANTHER" id="PTHR21569:SF1">
    <property type="entry name" value="SMALL RIBOSOMAL SUBUNIT PROTEIN US9M"/>
    <property type="match status" value="1"/>
</dbReference>
<dbReference type="Pfam" id="PF00380">
    <property type="entry name" value="Ribosomal_S9"/>
    <property type="match status" value="1"/>
</dbReference>
<dbReference type="SUPFAM" id="SSF54211">
    <property type="entry name" value="Ribosomal protein S5 domain 2-like"/>
    <property type="match status" value="1"/>
</dbReference>
<dbReference type="PROSITE" id="PS00360">
    <property type="entry name" value="RIBOSOMAL_S9"/>
    <property type="match status" value="1"/>
</dbReference>
<sequence>MAKVQYFGTGRRKKSVARVRLVAGDGKVIINNRDIENYFPIETLRVIVNQPLVLTETKDKYDVLVNVHGGGFTGQAGAVRHGISRALVKADENMKSSLKKAGFLTRDPRMKERKKYGLKKARRSPQFSKR</sequence>
<proteinExistence type="inferred from homology"/>
<accession>B1IGB8</accession>
<keyword id="KW-0687">Ribonucleoprotein</keyword>
<keyword id="KW-0689">Ribosomal protein</keyword>
<protein>
    <recommendedName>
        <fullName evidence="1">Small ribosomal subunit protein uS9</fullName>
    </recommendedName>
    <alternativeName>
        <fullName evidence="3">30S ribosomal protein S9</fullName>
    </alternativeName>
</protein>
<name>RS9_CLOBK</name>
<reference key="1">
    <citation type="journal article" date="2007" name="PLoS ONE">
        <title>Analysis of the neurotoxin complex genes in Clostridium botulinum A1-A4 and B1 strains: BoNT/A3, /Ba4 and /B1 clusters are located within plasmids.</title>
        <authorList>
            <person name="Smith T.J."/>
            <person name="Hill K.K."/>
            <person name="Foley B.T."/>
            <person name="Detter J.C."/>
            <person name="Munk A.C."/>
            <person name="Bruce D.C."/>
            <person name="Doggett N.A."/>
            <person name="Smith L.A."/>
            <person name="Marks J.D."/>
            <person name="Xie G."/>
            <person name="Brettin T.S."/>
        </authorList>
    </citation>
    <scope>NUCLEOTIDE SEQUENCE [LARGE SCALE GENOMIC DNA]</scope>
    <source>
        <strain>Okra / Type B1</strain>
    </source>
</reference>
<gene>
    <name evidence="1" type="primary">rpsI</name>
    <name type="ordered locus">CLD_1060</name>
</gene>
<comment type="similarity">
    <text evidence="1">Belongs to the universal ribosomal protein uS9 family.</text>
</comment>
<feature type="chain" id="PRO_1000128107" description="Small ribosomal subunit protein uS9">
    <location>
        <begin position="1"/>
        <end position="130"/>
    </location>
</feature>
<feature type="region of interest" description="Disordered" evidence="2">
    <location>
        <begin position="102"/>
        <end position="130"/>
    </location>
</feature>
<feature type="compositionally biased region" description="Basic residues" evidence="2">
    <location>
        <begin position="111"/>
        <end position="130"/>
    </location>
</feature>
<evidence type="ECO:0000255" key="1">
    <source>
        <dbReference type="HAMAP-Rule" id="MF_00532"/>
    </source>
</evidence>
<evidence type="ECO:0000256" key="2">
    <source>
        <dbReference type="SAM" id="MobiDB-lite"/>
    </source>
</evidence>
<evidence type="ECO:0000305" key="3"/>